<dbReference type="EMBL" id="U23084">
    <property type="protein sequence ID" value="AAC49103.1"/>
    <property type="molecule type" value="Genomic_DNA"/>
</dbReference>
<dbReference type="EMBL" id="Z71573">
    <property type="protein sequence ID" value="CAA96215.1"/>
    <property type="molecule type" value="Genomic_DNA"/>
</dbReference>
<dbReference type="EMBL" id="AY558365">
    <property type="protein sequence ID" value="AAS56691.1"/>
    <property type="molecule type" value="Genomic_DNA"/>
</dbReference>
<dbReference type="PIR" id="S60405">
    <property type="entry name" value="S60405"/>
</dbReference>
<dbReference type="STRING" id="4932.YNL296W"/>
<dbReference type="PaxDb" id="4932-YNL296W"/>
<dbReference type="EnsemblFungi" id="YNL296W_mRNA">
    <property type="protein sequence ID" value="YNL296W"/>
    <property type="gene ID" value="YNL296W"/>
</dbReference>
<dbReference type="AGR" id="SGD:S000005240"/>
<dbReference type="SGD" id="S000005240">
    <property type="gene designation" value="YNL296W"/>
</dbReference>
<dbReference type="HOGENOM" id="CLU_2252156_0_0_1"/>
<dbReference type="GO" id="GO:0030437">
    <property type="term" value="P:ascospore formation"/>
    <property type="evidence" value="ECO:0007001"/>
    <property type="project" value="SGD"/>
</dbReference>
<organism>
    <name type="scientific">Saccharomyces cerevisiae (strain ATCC 204508 / S288c)</name>
    <name type="common">Baker's yeast</name>
    <dbReference type="NCBI Taxonomy" id="559292"/>
    <lineage>
        <taxon>Eukaryota</taxon>
        <taxon>Fungi</taxon>
        <taxon>Dikarya</taxon>
        <taxon>Ascomycota</taxon>
        <taxon>Saccharomycotina</taxon>
        <taxon>Saccharomycetes</taxon>
        <taxon>Saccharomycetales</taxon>
        <taxon>Saccharomycetaceae</taxon>
        <taxon>Saccharomyces</taxon>
    </lineage>
</organism>
<protein>
    <recommendedName>
        <fullName>Putative uncharacterized protein YNL296W</fullName>
    </recommendedName>
</protein>
<sequence length="104" mass="11442">MKASKISDSRLRGIDGTVDSPCRHCIARVVILAFLDWQANTKGSAKSGCLSSSSKLCTLFNISMDLSLAWRMVEFLLFDSEDKERNSASSCLCMESNPPVFMAI</sequence>
<name>YN36_YEAST</name>
<proteinExistence type="uncertain"/>
<reference key="1">
    <citation type="journal article" date="1995" name="Yeast">
        <title>Sequence analysis of a 30 kb DNA segment from yeast chromosome XIV carrying a ribosomal protein gene cluster, the genes encoding a plasma membrane protein and a subunit of replication factor C, and a novel putative serine/threonine protein kinase gene.</title>
        <authorList>
            <person name="Maurer K.C.T."/>
            <person name="Urbanus J.H.M."/>
            <person name="Planta R.J."/>
        </authorList>
    </citation>
    <scope>NUCLEOTIDE SEQUENCE [GENOMIC DNA]</scope>
    <source>
        <strain>ATCC 96604 / S288c / FY1679</strain>
    </source>
</reference>
<reference key="2">
    <citation type="journal article" date="1997" name="Nature">
        <title>The nucleotide sequence of Saccharomyces cerevisiae chromosome XIV and its evolutionary implications.</title>
        <authorList>
            <person name="Philippsen P."/>
            <person name="Kleine K."/>
            <person name="Poehlmann R."/>
            <person name="Duesterhoeft A."/>
            <person name="Hamberg K."/>
            <person name="Hegemann J.H."/>
            <person name="Obermaier B."/>
            <person name="Urrestarazu L.A."/>
            <person name="Aert R."/>
            <person name="Albermann K."/>
            <person name="Altmann R."/>
            <person name="Andre B."/>
            <person name="Baladron V."/>
            <person name="Ballesta J.P.G."/>
            <person name="Becam A.-M."/>
            <person name="Beinhauer J.D."/>
            <person name="Boskovic J."/>
            <person name="Buitrago M.J."/>
            <person name="Bussereau F."/>
            <person name="Coster F."/>
            <person name="Crouzet M."/>
            <person name="D'Angelo M."/>
            <person name="Dal Pero F."/>
            <person name="De Antoni A."/>
            <person name="del Rey F."/>
            <person name="Doignon F."/>
            <person name="Domdey H."/>
            <person name="Dubois E."/>
            <person name="Fiedler T.A."/>
            <person name="Fleig U."/>
            <person name="Floeth M."/>
            <person name="Fritz C."/>
            <person name="Gaillardin C."/>
            <person name="Garcia-Cantalejo J.M."/>
            <person name="Glansdorff N."/>
            <person name="Goffeau A."/>
            <person name="Gueldener U."/>
            <person name="Herbert C.J."/>
            <person name="Heumann K."/>
            <person name="Heuss-Neitzel D."/>
            <person name="Hilbert H."/>
            <person name="Hinni K."/>
            <person name="Iraqui Houssaini I."/>
            <person name="Jacquet M."/>
            <person name="Jimenez A."/>
            <person name="Jonniaux J.-L."/>
            <person name="Karpfinger-Hartl L."/>
            <person name="Lanfranchi G."/>
            <person name="Lepingle A."/>
            <person name="Levesque H."/>
            <person name="Lyck R."/>
            <person name="Maftahi M."/>
            <person name="Mallet L."/>
            <person name="Maurer C.T.C."/>
            <person name="Messenguy F."/>
            <person name="Mewes H.-W."/>
            <person name="Moestl D."/>
            <person name="Nasr F."/>
            <person name="Nicaud J.-M."/>
            <person name="Niedenthal R.K."/>
            <person name="Pandolfo D."/>
            <person name="Pierard A."/>
            <person name="Piravandi E."/>
            <person name="Planta R.J."/>
            <person name="Pohl T.M."/>
            <person name="Purnelle B."/>
            <person name="Rebischung C."/>
            <person name="Remacha M.A."/>
            <person name="Revuelta J.L."/>
            <person name="Rinke M."/>
            <person name="Saiz J.E."/>
            <person name="Sartorello F."/>
            <person name="Scherens B."/>
            <person name="Sen-Gupta M."/>
            <person name="Soler-Mira A."/>
            <person name="Urbanus J.H.M."/>
            <person name="Valle G."/>
            <person name="Van Dyck L."/>
            <person name="Verhasselt P."/>
            <person name="Vierendeels F."/>
            <person name="Vissers S."/>
            <person name="Voet M."/>
            <person name="Volckaert G."/>
            <person name="Wach A."/>
            <person name="Wambutt R."/>
            <person name="Wedler H."/>
            <person name="Zollner A."/>
            <person name="Hani J."/>
        </authorList>
    </citation>
    <scope>NUCLEOTIDE SEQUENCE [LARGE SCALE GENOMIC DNA]</scope>
    <source>
        <strain>ATCC 204508 / S288c</strain>
    </source>
</reference>
<reference key="3">
    <citation type="journal article" date="2014" name="G3 (Bethesda)">
        <title>The reference genome sequence of Saccharomyces cerevisiae: Then and now.</title>
        <authorList>
            <person name="Engel S.R."/>
            <person name="Dietrich F.S."/>
            <person name="Fisk D.G."/>
            <person name="Binkley G."/>
            <person name="Balakrishnan R."/>
            <person name="Costanzo M.C."/>
            <person name="Dwight S.S."/>
            <person name="Hitz B.C."/>
            <person name="Karra K."/>
            <person name="Nash R.S."/>
            <person name="Weng S."/>
            <person name="Wong E.D."/>
            <person name="Lloyd P."/>
            <person name="Skrzypek M.S."/>
            <person name="Miyasato S.R."/>
            <person name="Simison M."/>
            <person name="Cherry J.M."/>
        </authorList>
    </citation>
    <scope>GENOME REANNOTATION</scope>
    <source>
        <strain>ATCC 204508 / S288c</strain>
    </source>
</reference>
<reference key="4">
    <citation type="journal article" date="2007" name="Genome Res.">
        <title>Approaching a complete repository of sequence-verified protein-encoding clones for Saccharomyces cerevisiae.</title>
        <authorList>
            <person name="Hu Y."/>
            <person name="Rolfs A."/>
            <person name="Bhullar B."/>
            <person name="Murthy T.V.S."/>
            <person name="Zhu C."/>
            <person name="Berger M.F."/>
            <person name="Camargo A.A."/>
            <person name="Kelley F."/>
            <person name="McCarron S."/>
            <person name="Jepson D."/>
            <person name="Richardson A."/>
            <person name="Raphael J."/>
            <person name="Moreira D."/>
            <person name="Taycher E."/>
            <person name="Zuo D."/>
            <person name="Mohr S."/>
            <person name="Kane M.F."/>
            <person name="Williamson J."/>
            <person name="Simpson A.J.G."/>
            <person name="Bulyk M.L."/>
            <person name="Harlow E."/>
            <person name="Marsischky G."/>
            <person name="Kolodner R.D."/>
            <person name="LaBaer J."/>
        </authorList>
    </citation>
    <scope>NUCLEOTIDE SEQUENCE [GENOMIC DNA]</scope>
    <source>
        <strain>ATCC 204508 / S288c</strain>
    </source>
</reference>
<feature type="chain" id="PRO_0000203373" description="Putative uncharacterized protein YNL296W">
    <location>
        <begin position="1"/>
        <end position="104"/>
    </location>
</feature>
<accession>P53828</accession>
<comment type="miscellaneous">
    <text evidence="1">Almost completely overlaps MON2.</text>
</comment>
<comment type="caution">
    <text evidence="2">Product of a dubious gene prediction unlikely to encode a functional protein. Because of that it is not part of the S.cerevisiae S288c complete/reference proteome set.</text>
</comment>
<gene>
    <name type="ordered locus">YNL296W</name>
    <name type="ORF">N0459</name>
</gene>
<evidence type="ECO:0000305" key="1"/>
<evidence type="ECO:0000305" key="2">
    <source>
    </source>
</evidence>